<protein>
    <recommendedName>
        <fullName evidence="1">Ribosomal RNA small subunit methyltransferase G</fullName>
        <ecNumber evidence="1">2.1.1.-</ecNumber>
    </recommendedName>
    <alternativeName>
        <fullName evidence="1">16S rRNA 7-methylguanosine methyltransferase</fullName>
        <shortName evidence="1">16S rRNA m7G methyltransferase</shortName>
    </alternativeName>
</protein>
<evidence type="ECO:0000255" key="1">
    <source>
        <dbReference type="HAMAP-Rule" id="MF_00074"/>
    </source>
</evidence>
<keyword id="KW-0963">Cytoplasm</keyword>
<keyword id="KW-0489">Methyltransferase</keyword>
<keyword id="KW-0698">rRNA processing</keyword>
<keyword id="KW-0949">S-adenosyl-L-methionine</keyword>
<keyword id="KW-0808">Transferase</keyword>
<feature type="chain" id="PRO_1000117062" description="Ribosomal RNA small subunit methyltransferase G">
    <location>
        <begin position="1"/>
        <end position="239"/>
    </location>
</feature>
<feature type="binding site" evidence="1">
    <location>
        <position position="77"/>
    </location>
    <ligand>
        <name>S-adenosyl-L-methionine</name>
        <dbReference type="ChEBI" id="CHEBI:59789"/>
    </ligand>
</feature>
<feature type="binding site" evidence="1">
    <location>
        <position position="82"/>
    </location>
    <ligand>
        <name>S-adenosyl-L-methionine</name>
        <dbReference type="ChEBI" id="CHEBI:59789"/>
    </ligand>
</feature>
<feature type="binding site" evidence="1">
    <location>
        <begin position="128"/>
        <end position="129"/>
    </location>
    <ligand>
        <name>S-adenosyl-L-methionine</name>
        <dbReference type="ChEBI" id="CHEBI:59789"/>
    </ligand>
</feature>
<feature type="binding site" evidence="1">
    <location>
        <position position="147"/>
    </location>
    <ligand>
        <name>S-adenosyl-L-methionine</name>
        <dbReference type="ChEBI" id="CHEBI:59789"/>
    </ligand>
</feature>
<sequence length="239" mass="27225">MNIEQFQSMLEEKGITLSSRQLEQFKIYFETLVEWNEKMNLTAITEKEEVYLKHFFDSITAAFYYDFSKPFSICDVGAGAGFPSIPLKICFPHLKVTIVDSLQKRINFLNHLAQKLELSDVAFCHDRAETFGKKEGVRESYDIVMARAVARLSVLSELCLPLVKVGGTFIAMKGAAANEEIENGKYALEVLGGELKEMSTFQLPFEESERNILLIEKKRKTPKKYPRKPGTPNKLPIEK</sequence>
<accession>B7IST2</accession>
<organism>
    <name type="scientific">Bacillus cereus (strain G9842)</name>
    <dbReference type="NCBI Taxonomy" id="405531"/>
    <lineage>
        <taxon>Bacteria</taxon>
        <taxon>Bacillati</taxon>
        <taxon>Bacillota</taxon>
        <taxon>Bacilli</taxon>
        <taxon>Bacillales</taxon>
        <taxon>Bacillaceae</taxon>
        <taxon>Bacillus</taxon>
        <taxon>Bacillus cereus group</taxon>
    </lineage>
</organism>
<comment type="function">
    <text evidence="1">Specifically methylates the N7 position of guanine in position 535 of 16S rRNA.</text>
</comment>
<comment type="subcellular location">
    <subcellularLocation>
        <location evidence="1">Cytoplasm</location>
    </subcellularLocation>
</comment>
<comment type="similarity">
    <text evidence="1">Belongs to the methyltransferase superfamily. RNA methyltransferase RsmG family.</text>
</comment>
<proteinExistence type="inferred from homology"/>
<gene>
    <name evidence="1" type="primary">rsmG</name>
    <name type="ordered locus">BCG9842_B5326</name>
</gene>
<reference key="1">
    <citation type="submission" date="2008-10" db="EMBL/GenBank/DDBJ databases">
        <title>Genome sequence of Bacillus cereus G9842.</title>
        <authorList>
            <person name="Dodson R.J."/>
            <person name="Durkin A.S."/>
            <person name="Rosovitz M.J."/>
            <person name="Rasko D.A."/>
            <person name="Hoffmaster A."/>
            <person name="Ravel J."/>
            <person name="Sutton G."/>
        </authorList>
    </citation>
    <scope>NUCLEOTIDE SEQUENCE [LARGE SCALE GENOMIC DNA]</scope>
    <source>
        <strain>G9842</strain>
    </source>
</reference>
<dbReference type="EC" id="2.1.1.-" evidence="1"/>
<dbReference type="EMBL" id="CP001186">
    <property type="protein sequence ID" value="ACK94863.1"/>
    <property type="molecule type" value="Genomic_DNA"/>
</dbReference>
<dbReference type="RefSeq" id="WP_001019628.1">
    <property type="nucleotide sequence ID" value="NC_011772.1"/>
</dbReference>
<dbReference type="SMR" id="B7IST2"/>
<dbReference type="GeneID" id="92885935"/>
<dbReference type="KEGG" id="bcg:BCG9842_B5326"/>
<dbReference type="HOGENOM" id="CLU_065341_0_2_9"/>
<dbReference type="Proteomes" id="UP000006744">
    <property type="component" value="Chromosome"/>
</dbReference>
<dbReference type="GO" id="GO:0005829">
    <property type="term" value="C:cytosol"/>
    <property type="evidence" value="ECO:0007669"/>
    <property type="project" value="TreeGrafter"/>
</dbReference>
<dbReference type="GO" id="GO:0070043">
    <property type="term" value="F:rRNA (guanine-N7-)-methyltransferase activity"/>
    <property type="evidence" value="ECO:0007669"/>
    <property type="project" value="UniProtKB-UniRule"/>
</dbReference>
<dbReference type="CDD" id="cd02440">
    <property type="entry name" value="AdoMet_MTases"/>
    <property type="match status" value="1"/>
</dbReference>
<dbReference type="FunFam" id="3.40.50.150:FF:000041">
    <property type="entry name" value="Ribosomal RNA small subunit methyltransferase G"/>
    <property type="match status" value="1"/>
</dbReference>
<dbReference type="Gene3D" id="3.40.50.150">
    <property type="entry name" value="Vaccinia Virus protein VP39"/>
    <property type="match status" value="1"/>
</dbReference>
<dbReference type="HAMAP" id="MF_00074">
    <property type="entry name" value="16SrRNA_methyltr_G"/>
    <property type="match status" value="1"/>
</dbReference>
<dbReference type="InterPro" id="IPR003682">
    <property type="entry name" value="rRNA_ssu_MeTfrase_G"/>
</dbReference>
<dbReference type="InterPro" id="IPR029063">
    <property type="entry name" value="SAM-dependent_MTases_sf"/>
</dbReference>
<dbReference type="NCBIfam" id="TIGR00138">
    <property type="entry name" value="rsmG_gidB"/>
    <property type="match status" value="1"/>
</dbReference>
<dbReference type="PANTHER" id="PTHR31760">
    <property type="entry name" value="S-ADENOSYL-L-METHIONINE-DEPENDENT METHYLTRANSFERASES SUPERFAMILY PROTEIN"/>
    <property type="match status" value="1"/>
</dbReference>
<dbReference type="PANTHER" id="PTHR31760:SF0">
    <property type="entry name" value="S-ADENOSYL-L-METHIONINE-DEPENDENT METHYLTRANSFERASES SUPERFAMILY PROTEIN"/>
    <property type="match status" value="1"/>
</dbReference>
<dbReference type="Pfam" id="PF02527">
    <property type="entry name" value="GidB"/>
    <property type="match status" value="1"/>
</dbReference>
<dbReference type="PIRSF" id="PIRSF003078">
    <property type="entry name" value="GidB"/>
    <property type="match status" value="1"/>
</dbReference>
<dbReference type="SUPFAM" id="SSF53335">
    <property type="entry name" value="S-adenosyl-L-methionine-dependent methyltransferases"/>
    <property type="match status" value="1"/>
</dbReference>
<name>RSMG_BACC2</name>